<sequence>MEIKQAEFIISAVHPSQYPKDKRIEIAFVGRSNVGKSSLINALTNRKKLVKVSGTPGKTRLINFFLINNEFYFVDLPGYGYAKISKTEKKSWGKVVEDYLRGREELKRVILLLDCRHKPTNDDITMYKWLKYYNYNTIIVATKVDKVSKSQLFKNLKIIKDTLKPETGDEILTFSSLNKQGKEEFLKVLESVIDFYS</sequence>
<accession>A5N2K5</accession>
<keyword id="KW-0131">Cell cycle</keyword>
<keyword id="KW-0132">Cell division</keyword>
<keyword id="KW-0342">GTP-binding</keyword>
<keyword id="KW-0460">Magnesium</keyword>
<keyword id="KW-0479">Metal-binding</keyword>
<keyword id="KW-0547">Nucleotide-binding</keyword>
<keyword id="KW-1185">Reference proteome</keyword>
<keyword id="KW-0717">Septation</keyword>
<protein>
    <recommendedName>
        <fullName evidence="1">Probable GTP-binding protein EngB</fullName>
    </recommendedName>
</protein>
<reference key="1">
    <citation type="journal article" date="2008" name="Proc. Natl. Acad. Sci. U.S.A.">
        <title>The genome of Clostridium kluyveri, a strict anaerobe with unique metabolic features.</title>
        <authorList>
            <person name="Seedorf H."/>
            <person name="Fricke W.F."/>
            <person name="Veith B."/>
            <person name="Brueggemann H."/>
            <person name="Liesegang H."/>
            <person name="Strittmatter A."/>
            <person name="Miethke M."/>
            <person name="Buckel W."/>
            <person name="Hinderberger J."/>
            <person name="Li F."/>
            <person name="Hagemeier C."/>
            <person name="Thauer R.K."/>
            <person name="Gottschalk G."/>
        </authorList>
    </citation>
    <scope>NUCLEOTIDE SEQUENCE [LARGE SCALE GENOMIC DNA]</scope>
    <source>
        <strain>ATCC 8527 / DSM 555 / NBRC 12016 / NCIMB 10680 / K1</strain>
    </source>
</reference>
<proteinExistence type="inferred from homology"/>
<name>ENGB_CLOK5</name>
<dbReference type="EMBL" id="CP000673">
    <property type="protein sequence ID" value="EDK35351.1"/>
    <property type="molecule type" value="Genomic_DNA"/>
</dbReference>
<dbReference type="SMR" id="A5N2K5"/>
<dbReference type="STRING" id="431943.CKL_3348"/>
<dbReference type="KEGG" id="ckl:CKL_3348"/>
<dbReference type="eggNOG" id="COG0218">
    <property type="taxonomic scope" value="Bacteria"/>
</dbReference>
<dbReference type="HOGENOM" id="CLU_033732_3_0_9"/>
<dbReference type="Proteomes" id="UP000002411">
    <property type="component" value="Chromosome"/>
</dbReference>
<dbReference type="GO" id="GO:0005829">
    <property type="term" value="C:cytosol"/>
    <property type="evidence" value="ECO:0007669"/>
    <property type="project" value="TreeGrafter"/>
</dbReference>
<dbReference type="GO" id="GO:0005525">
    <property type="term" value="F:GTP binding"/>
    <property type="evidence" value="ECO:0007669"/>
    <property type="project" value="UniProtKB-UniRule"/>
</dbReference>
<dbReference type="GO" id="GO:0046872">
    <property type="term" value="F:metal ion binding"/>
    <property type="evidence" value="ECO:0007669"/>
    <property type="project" value="UniProtKB-KW"/>
</dbReference>
<dbReference type="GO" id="GO:0000917">
    <property type="term" value="P:division septum assembly"/>
    <property type="evidence" value="ECO:0007669"/>
    <property type="project" value="UniProtKB-KW"/>
</dbReference>
<dbReference type="CDD" id="cd01876">
    <property type="entry name" value="YihA_EngB"/>
    <property type="match status" value="1"/>
</dbReference>
<dbReference type="FunFam" id="3.40.50.300:FF:000098">
    <property type="entry name" value="Probable GTP-binding protein EngB"/>
    <property type="match status" value="1"/>
</dbReference>
<dbReference type="Gene3D" id="3.40.50.300">
    <property type="entry name" value="P-loop containing nucleotide triphosphate hydrolases"/>
    <property type="match status" value="1"/>
</dbReference>
<dbReference type="HAMAP" id="MF_00321">
    <property type="entry name" value="GTPase_EngB"/>
    <property type="match status" value="1"/>
</dbReference>
<dbReference type="InterPro" id="IPR030393">
    <property type="entry name" value="G_ENGB_dom"/>
</dbReference>
<dbReference type="InterPro" id="IPR006073">
    <property type="entry name" value="GTP-bd"/>
</dbReference>
<dbReference type="InterPro" id="IPR019987">
    <property type="entry name" value="GTP-bd_ribosome_bio_YsxC"/>
</dbReference>
<dbReference type="InterPro" id="IPR027417">
    <property type="entry name" value="P-loop_NTPase"/>
</dbReference>
<dbReference type="InterPro" id="IPR005225">
    <property type="entry name" value="Small_GTP-bd"/>
</dbReference>
<dbReference type="NCBIfam" id="TIGR03598">
    <property type="entry name" value="GTPase_YsxC"/>
    <property type="match status" value="1"/>
</dbReference>
<dbReference type="NCBIfam" id="TIGR00231">
    <property type="entry name" value="small_GTP"/>
    <property type="match status" value="1"/>
</dbReference>
<dbReference type="PANTHER" id="PTHR11649:SF13">
    <property type="entry name" value="ENGB-TYPE G DOMAIN-CONTAINING PROTEIN"/>
    <property type="match status" value="1"/>
</dbReference>
<dbReference type="PANTHER" id="PTHR11649">
    <property type="entry name" value="MSS1/TRME-RELATED GTP-BINDING PROTEIN"/>
    <property type="match status" value="1"/>
</dbReference>
<dbReference type="Pfam" id="PF01926">
    <property type="entry name" value="MMR_HSR1"/>
    <property type="match status" value="1"/>
</dbReference>
<dbReference type="SUPFAM" id="SSF52540">
    <property type="entry name" value="P-loop containing nucleoside triphosphate hydrolases"/>
    <property type="match status" value="1"/>
</dbReference>
<dbReference type="PROSITE" id="PS51706">
    <property type="entry name" value="G_ENGB"/>
    <property type="match status" value="1"/>
</dbReference>
<comment type="function">
    <text evidence="1">Necessary for normal cell division and for the maintenance of normal septation.</text>
</comment>
<comment type="cofactor">
    <cofactor evidence="1">
        <name>Mg(2+)</name>
        <dbReference type="ChEBI" id="CHEBI:18420"/>
    </cofactor>
</comment>
<comment type="similarity">
    <text evidence="1">Belongs to the TRAFAC class TrmE-Era-EngA-EngB-Septin-like GTPase superfamily. EngB GTPase family.</text>
</comment>
<organism>
    <name type="scientific">Clostridium kluyveri (strain ATCC 8527 / DSM 555 / NBRC 12016 / NCIMB 10680 / K1)</name>
    <dbReference type="NCBI Taxonomy" id="431943"/>
    <lineage>
        <taxon>Bacteria</taxon>
        <taxon>Bacillati</taxon>
        <taxon>Bacillota</taxon>
        <taxon>Clostridia</taxon>
        <taxon>Eubacteriales</taxon>
        <taxon>Clostridiaceae</taxon>
        <taxon>Clostridium</taxon>
    </lineage>
</organism>
<evidence type="ECO:0000255" key="1">
    <source>
        <dbReference type="HAMAP-Rule" id="MF_00321"/>
    </source>
</evidence>
<gene>
    <name evidence="1" type="primary">engB</name>
    <name type="ordered locus">CKL_3348</name>
</gene>
<feature type="chain" id="PRO_1000079166" description="Probable GTP-binding protein EngB">
    <location>
        <begin position="1"/>
        <end position="197"/>
    </location>
</feature>
<feature type="domain" description="EngB-type G" evidence="1">
    <location>
        <begin position="22"/>
        <end position="195"/>
    </location>
</feature>
<feature type="binding site" evidence="1">
    <location>
        <begin position="30"/>
        <end position="37"/>
    </location>
    <ligand>
        <name>GTP</name>
        <dbReference type="ChEBI" id="CHEBI:37565"/>
    </ligand>
</feature>
<feature type="binding site" evidence="1">
    <location>
        <position position="37"/>
    </location>
    <ligand>
        <name>Mg(2+)</name>
        <dbReference type="ChEBI" id="CHEBI:18420"/>
    </ligand>
</feature>
<feature type="binding site" evidence="1">
    <location>
        <begin position="57"/>
        <end position="61"/>
    </location>
    <ligand>
        <name>GTP</name>
        <dbReference type="ChEBI" id="CHEBI:37565"/>
    </ligand>
</feature>
<feature type="binding site" evidence="1">
    <location>
        <position position="59"/>
    </location>
    <ligand>
        <name>Mg(2+)</name>
        <dbReference type="ChEBI" id="CHEBI:18420"/>
    </ligand>
</feature>
<feature type="binding site" evidence="1">
    <location>
        <begin position="75"/>
        <end position="78"/>
    </location>
    <ligand>
        <name>GTP</name>
        <dbReference type="ChEBI" id="CHEBI:37565"/>
    </ligand>
</feature>
<feature type="binding site" evidence="1">
    <location>
        <begin position="142"/>
        <end position="145"/>
    </location>
    <ligand>
        <name>GTP</name>
        <dbReference type="ChEBI" id="CHEBI:37565"/>
    </ligand>
</feature>
<feature type="binding site" evidence="1">
    <location>
        <begin position="174"/>
        <end position="176"/>
    </location>
    <ligand>
        <name>GTP</name>
        <dbReference type="ChEBI" id="CHEBI:37565"/>
    </ligand>
</feature>